<feature type="chain" id="PRO_0000326672" description="Acylphosphatase">
    <location>
        <begin position="1"/>
        <end position="98"/>
    </location>
</feature>
<feature type="domain" description="Acylphosphatase-like" evidence="1">
    <location>
        <begin position="12"/>
        <end position="98"/>
    </location>
</feature>
<feature type="active site" evidence="1">
    <location>
        <position position="27"/>
    </location>
</feature>
<feature type="active site" evidence="1">
    <location>
        <position position="45"/>
    </location>
</feature>
<keyword id="KW-0378">Hydrolase</keyword>
<keyword id="KW-1185">Reference proteome</keyword>
<proteinExistence type="inferred from homology"/>
<sequence>MSGDDLDERIETYYVRVRGVVQGVGFRHATVREAHALKLRGWVANLDDGSVEAMLQGSAPQIDRMLAWLRHGPPAAHVTEVTFEEHRTDKRFERFQQH</sequence>
<protein>
    <recommendedName>
        <fullName>Acylphosphatase</fullName>
        <ecNumber>3.6.1.7</ecNumber>
    </recommendedName>
    <alternativeName>
        <fullName>Acylphosphate phosphohydrolase</fullName>
    </alternativeName>
</protein>
<accession>Q63IA7</accession>
<dbReference type="EC" id="3.6.1.7"/>
<dbReference type="EMBL" id="BX571966">
    <property type="protein sequence ID" value="CAH39648.1"/>
    <property type="molecule type" value="Genomic_DNA"/>
</dbReference>
<dbReference type="RefSeq" id="WP_004187760.1">
    <property type="nucleotide sequence ID" value="NZ_CP009537.1"/>
</dbReference>
<dbReference type="RefSeq" id="YP_112165.1">
    <property type="nucleotide sequence ID" value="NC_006351.1"/>
</dbReference>
<dbReference type="SMR" id="Q63IA7"/>
<dbReference type="STRING" id="272560.BPSS2164"/>
<dbReference type="KEGG" id="bps:BPSS2164"/>
<dbReference type="PATRIC" id="fig|272560.51.peg.5737"/>
<dbReference type="eggNOG" id="COG1254">
    <property type="taxonomic scope" value="Bacteria"/>
</dbReference>
<dbReference type="Proteomes" id="UP000000605">
    <property type="component" value="Chromosome 2"/>
</dbReference>
<dbReference type="GO" id="GO:0003998">
    <property type="term" value="F:acylphosphatase activity"/>
    <property type="evidence" value="ECO:0007669"/>
    <property type="project" value="UniProtKB-EC"/>
</dbReference>
<dbReference type="Gene3D" id="3.30.70.100">
    <property type="match status" value="1"/>
</dbReference>
<dbReference type="InterPro" id="IPR020456">
    <property type="entry name" value="Acylphosphatase"/>
</dbReference>
<dbReference type="InterPro" id="IPR001792">
    <property type="entry name" value="Acylphosphatase-like_dom"/>
</dbReference>
<dbReference type="InterPro" id="IPR036046">
    <property type="entry name" value="Acylphosphatase-like_dom_sf"/>
</dbReference>
<dbReference type="InterPro" id="IPR017968">
    <property type="entry name" value="Acylphosphatase_CS"/>
</dbReference>
<dbReference type="NCBIfam" id="NF010998">
    <property type="entry name" value="PRK14424.1"/>
    <property type="match status" value="1"/>
</dbReference>
<dbReference type="PANTHER" id="PTHR47268">
    <property type="entry name" value="ACYLPHOSPHATASE"/>
    <property type="match status" value="1"/>
</dbReference>
<dbReference type="PANTHER" id="PTHR47268:SF4">
    <property type="entry name" value="ACYLPHOSPHATASE"/>
    <property type="match status" value="1"/>
</dbReference>
<dbReference type="Pfam" id="PF00708">
    <property type="entry name" value="Acylphosphatase"/>
    <property type="match status" value="1"/>
</dbReference>
<dbReference type="PRINTS" id="PR00112">
    <property type="entry name" value="ACYLPHPHTASE"/>
</dbReference>
<dbReference type="SUPFAM" id="SSF54975">
    <property type="entry name" value="Acylphosphatase/BLUF domain-like"/>
    <property type="match status" value="1"/>
</dbReference>
<dbReference type="PROSITE" id="PS00150">
    <property type="entry name" value="ACYLPHOSPHATASE_1"/>
    <property type="match status" value="1"/>
</dbReference>
<dbReference type="PROSITE" id="PS00151">
    <property type="entry name" value="ACYLPHOSPHATASE_2"/>
    <property type="match status" value="1"/>
</dbReference>
<dbReference type="PROSITE" id="PS51160">
    <property type="entry name" value="ACYLPHOSPHATASE_3"/>
    <property type="match status" value="1"/>
</dbReference>
<name>ACYP_BURPS</name>
<evidence type="ECO:0000255" key="1">
    <source>
        <dbReference type="PROSITE-ProRule" id="PRU00520"/>
    </source>
</evidence>
<evidence type="ECO:0000305" key="2"/>
<comment type="catalytic activity">
    <reaction>
        <text>an acyl phosphate + H2O = a carboxylate + phosphate + H(+)</text>
        <dbReference type="Rhea" id="RHEA:14965"/>
        <dbReference type="ChEBI" id="CHEBI:15377"/>
        <dbReference type="ChEBI" id="CHEBI:15378"/>
        <dbReference type="ChEBI" id="CHEBI:29067"/>
        <dbReference type="ChEBI" id="CHEBI:43474"/>
        <dbReference type="ChEBI" id="CHEBI:59918"/>
        <dbReference type="EC" id="3.6.1.7"/>
    </reaction>
</comment>
<comment type="similarity">
    <text evidence="2">Belongs to the acylphosphatase family.</text>
</comment>
<organism>
    <name type="scientific">Burkholderia pseudomallei (strain K96243)</name>
    <dbReference type="NCBI Taxonomy" id="272560"/>
    <lineage>
        <taxon>Bacteria</taxon>
        <taxon>Pseudomonadati</taxon>
        <taxon>Pseudomonadota</taxon>
        <taxon>Betaproteobacteria</taxon>
        <taxon>Burkholderiales</taxon>
        <taxon>Burkholderiaceae</taxon>
        <taxon>Burkholderia</taxon>
        <taxon>pseudomallei group</taxon>
    </lineage>
</organism>
<gene>
    <name type="primary">acyP</name>
    <name type="ordered locus">BPSS2164</name>
</gene>
<reference key="1">
    <citation type="journal article" date="2004" name="Proc. Natl. Acad. Sci. U.S.A.">
        <title>Genomic plasticity of the causative agent of melioidosis, Burkholderia pseudomallei.</title>
        <authorList>
            <person name="Holden M.T.G."/>
            <person name="Titball R.W."/>
            <person name="Peacock S.J."/>
            <person name="Cerdeno-Tarraga A.-M."/>
            <person name="Atkins T."/>
            <person name="Crossman L.C."/>
            <person name="Pitt T."/>
            <person name="Churcher C."/>
            <person name="Mungall K.L."/>
            <person name="Bentley S.D."/>
            <person name="Sebaihia M."/>
            <person name="Thomson N.R."/>
            <person name="Bason N."/>
            <person name="Beacham I.R."/>
            <person name="Brooks K."/>
            <person name="Brown K.A."/>
            <person name="Brown N.F."/>
            <person name="Challis G.L."/>
            <person name="Cherevach I."/>
            <person name="Chillingworth T."/>
            <person name="Cronin A."/>
            <person name="Crossett B."/>
            <person name="Davis P."/>
            <person name="DeShazer D."/>
            <person name="Feltwell T."/>
            <person name="Fraser A."/>
            <person name="Hance Z."/>
            <person name="Hauser H."/>
            <person name="Holroyd S."/>
            <person name="Jagels K."/>
            <person name="Keith K.E."/>
            <person name="Maddison M."/>
            <person name="Moule S."/>
            <person name="Price C."/>
            <person name="Quail M.A."/>
            <person name="Rabbinowitsch E."/>
            <person name="Rutherford K."/>
            <person name="Sanders M."/>
            <person name="Simmonds M."/>
            <person name="Songsivilai S."/>
            <person name="Stevens K."/>
            <person name="Tumapa S."/>
            <person name="Vesaratchavest M."/>
            <person name="Whitehead S."/>
            <person name="Yeats C."/>
            <person name="Barrell B.G."/>
            <person name="Oyston P.C.F."/>
            <person name="Parkhill J."/>
        </authorList>
    </citation>
    <scope>NUCLEOTIDE SEQUENCE [LARGE SCALE GENOMIC DNA]</scope>
    <source>
        <strain>K96243</strain>
    </source>
</reference>